<feature type="chain" id="PRO_0000401104" description="Transcription factor coe2-B">
    <location>
        <begin position="1"/>
        <end position="580"/>
    </location>
</feature>
<feature type="domain" description="IPT/TIG" evidence="3">
    <location>
        <begin position="259"/>
        <end position="341"/>
    </location>
</feature>
<feature type="zinc finger region" description="C5-type" evidence="3">
    <location>
        <begin position="148"/>
        <end position="167"/>
    </location>
</feature>
<feature type="region of interest" description="Interaction with DNA" evidence="1">
    <location>
        <begin position="60"/>
        <end position="63"/>
    </location>
</feature>
<feature type="region of interest" description="Interaction with DNA" evidence="1">
    <location>
        <begin position="194"/>
        <end position="201"/>
    </location>
</feature>
<feature type="region of interest" description="Interaction with DNA" evidence="1">
    <location>
        <begin position="233"/>
        <end position="236"/>
    </location>
</feature>
<feature type="region of interest" description="Disordered" evidence="4">
    <location>
        <begin position="455"/>
        <end position="492"/>
    </location>
</feature>
<feature type="compositionally biased region" description="Low complexity" evidence="4">
    <location>
        <begin position="459"/>
        <end position="481"/>
    </location>
</feature>
<feature type="compositionally biased region" description="Polar residues" evidence="4">
    <location>
        <begin position="482"/>
        <end position="492"/>
    </location>
</feature>
<feature type="site" description="Interaction with DNA" evidence="1">
    <location>
        <position position="160"/>
    </location>
</feature>
<feature type="site" description="Interaction with DNA" evidence="1">
    <location>
        <position position="169"/>
    </location>
</feature>
<feature type="splice variant" id="VSP_040041" description="In isoform 2." evidence="6">
    <location>
        <begin position="249"/>
        <end position="256"/>
    </location>
</feature>
<feature type="sequence conflict" description="In Ref. 1; AAB96782." evidence="7" ref="1">
    <original>R</original>
    <variation>T</variation>
    <location>
        <position position="239"/>
    </location>
</feature>
<feature type="sequence conflict" description="In Ref. 1; AAB96782." evidence="7" ref="1">
    <original>V</original>
    <variation>E</variation>
    <location>
        <position position="291"/>
    </location>
</feature>
<feature type="sequence conflict" description="In Ref. 1; AAB96782." evidence="7" ref="1">
    <original>I</original>
    <variation>M</variation>
    <location>
        <position position="302"/>
    </location>
</feature>
<feature type="sequence conflict" description="In Ref. 1; AAB96782." evidence="7" ref="1">
    <original>N</original>
    <variation>K</variation>
    <location>
        <position position="489"/>
    </location>
</feature>
<feature type="sequence conflict" description="In Ref. 1; AAB96782." evidence="7" ref="1">
    <original>AFAPVIRP</original>
    <variation>GLCPCHTT</variation>
    <location>
        <begin position="546"/>
        <end position="553"/>
    </location>
</feature>
<feature type="sequence conflict" description="In Ref. 1; AAB96782." evidence="7" ref="1">
    <original>AMTGLVVPP</original>
    <variation>ENLLKDSPAMRQGQYFAQCSNPSVGFW</variation>
    <location>
        <begin position="571"/>
        <end position="579"/>
    </location>
</feature>
<accession>B7ZRI2</accession>
<accession>O57515</accession>
<accession>O73741</accession>
<comment type="function">
    <text evidence="5">May play a pivotal role in the transcriptional cascade that specifies primary neurons in embryos. Stabilizes the higher neural potential of selected progenitor cells that express neurog2/X-ngnr-1 by maintaining Delta-Notch signaling. Thus ensures the transition between neural competence and irreversible commitment to a neural fate. Also promotes neuronal differentiation by activating neurod1 expression, directly or indirectly.</text>
</comment>
<comment type="subcellular location">
    <subcellularLocation>
        <location evidence="3">Nucleus</location>
    </subcellularLocation>
</comment>
<comment type="alternative products">
    <event type="alternative splicing"/>
    <isoform>
        <id>B7ZRI2-1</id>
        <name>1</name>
        <sequence type="displayed"/>
    </isoform>
    <isoform>
        <id>B7ZRI2-2</id>
        <name evidence="5">2</name>
        <sequence type="described" ref="VSP_040041"/>
    </isoform>
</comment>
<comment type="tissue specificity">
    <text evidence="5">In embryos, expressed in precursors of primary neurons. In adults, expressed at high levels in the brain, and at low levels in the somatic muscles, testis, and possibly the spleen.</text>
</comment>
<comment type="developmental stage">
    <text evidence="5">Expression begins during primary neurogenesis at the neural plate stage (stage 12) and accumulates at the tailbud stage. Expressed after neurog2/X-ngnr-1 and before neurod1. Also expressed in adults.</text>
</comment>
<comment type="similarity">
    <text evidence="3">Belongs to the COE family.</text>
</comment>
<protein>
    <recommendedName>
        <fullName evidence="6">Transcription factor coe2-B</fullName>
        <shortName evidence="6">Xcoe2</shortName>
    </recommendedName>
    <alternativeName>
        <fullName evidence="2">Early B-cell factor 2-B</fullName>
        <shortName evidence="2">EBF-2-B</shortName>
        <shortName>Xebf-2-B</shortName>
    </alternativeName>
</protein>
<sequence length="580" mass="63486">MFGVQETFGTALRDKALGVGMDPVRSWVRNVGVVDAKVAAQSGVAVSRAHFEKQPPSNLRKSNFFHFVLALYDRQGQPIEIERTSFVDFVENEKEFSTEKTNNGTHYKLQLLYSNGVRTEQDLYVRLIDSVTKQPISYEGQNKNPEMCRVLLTHEVMCSRCCEKKSCGNRNETPSDPVIIDRFFLKFFLKCNQNCLKTAGNPRDMRRFQVVLSTTVNVDGHVLAVSDNMFVHNNSKHGRRARRLDPSEGTDPSLEYATPCIKAISPSEGWTTGGAMVIIIGDNFFDGLQVVFGTMLVWSELITPHAIRVQTPPRHIPGVVEVTLSYKSKQFCKGAPGRFIYTALNEPTIDYGFQRLQKVIPRHPGDPERMAKEMLLKRAADLVEALYGTPHNNQDIILKRAADIAEALYSVPRNHNQIPALSSSPVHSGMMGINSYGGQLGVSISESQANNQGYIRNTSSISPRGYSSSSTPQQSNYSTPSNSMNGYSNVPMSNLGVPGSPGFINGSPTTSPYGIMPSSPPVGSSGSSSILPFSSSVFPSIKQKSAFAPVIRPQGSPSPACSSSNSNGFRAMTGLVVPPM</sequence>
<dbReference type="EMBL" id="AF041138">
    <property type="protein sequence ID" value="AAB96782.1"/>
    <property type="molecule type" value="mRNA"/>
</dbReference>
<dbReference type="EMBL" id="BC170176">
    <property type="protein sequence ID" value="AAI70176.1"/>
    <property type="molecule type" value="mRNA"/>
</dbReference>
<dbReference type="RefSeq" id="NP_001079147.1">
    <property type="nucleotide sequence ID" value="NM_001085678.1"/>
</dbReference>
<dbReference type="RefSeq" id="XP_018106084.1">
    <molecule id="B7ZRI2-1"/>
    <property type="nucleotide sequence ID" value="XM_018250595.1"/>
</dbReference>
<dbReference type="RefSeq" id="XP_018106085.1">
    <molecule id="B7ZRI2-2"/>
    <property type="nucleotide sequence ID" value="XM_018250596.1"/>
</dbReference>
<dbReference type="SMR" id="B7ZRI2"/>
<dbReference type="GeneID" id="373696"/>
<dbReference type="KEGG" id="xla:373696"/>
<dbReference type="AGR" id="Xenbase:XB-GENE-6252857"/>
<dbReference type="CTD" id="373696"/>
<dbReference type="Xenbase" id="XB-GENE-6252857">
    <property type="gene designation" value="ebf2.L"/>
</dbReference>
<dbReference type="OMA" id="QGYMRNS"/>
<dbReference type="OrthoDB" id="25246at2759"/>
<dbReference type="Proteomes" id="UP000186698">
    <property type="component" value="Chromosome 3L"/>
</dbReference>
<dbReference type="Bgee" id="373696">
    <property type="expression patterns" value="Expressed in neurula embryo and 5 other cell types or tissues"/>
</dbReference>
<dbReference type="GO" id="GO:0005634">
    <property type="term" value="C:nucleus"/>
    <property type="evidence" value="ECO:0007669"/>
    <property type="project" value="UniProtKB-SubCell"/>
</dbReference>
<dbReference type="GO" id="GO:0000981">
    <property type="term" value="F:DNA-binding transcription factor activity, RNA polymerase II-specific"/>
    <property type="evidence" value="ECO:0000318"/>
    <property type="project" value="GO_Central"/>
</dbReference>
<dbReference type="GO" id="GO:0000978">
    <property type="term" value="F:RNA polymerase II cis-regulatory region sequence-specific DNA binding"/>
    <property type="evidence" value="ECO:0000318"/>
    <property type="project" value="GO_Central"/>
</dbReference>
<dbReference type="GO" id="GO:0008270">
    <property type="term" value="F:zinc ion binding"/>
    <property type="evidence" value="ECO:0007669"/>
    <property type="project" value="UniProtKB-KW"/>
</dbReference>
<dbReference type="GO" id="GO:0030154">
    <property type="term" value="P:cell differentiation"/>
    <property type="evidence" value="ECO:0007669"/>
    <property type="project" value="UniProtKB-KW"/>
</dbReference>
<dbReference type="GO" id="GO:0007399">
    <property type="term" value="P:nervous system development"/>
    <property type="evidence" value="ECO:0007669"/>
    <property type="project" value="UniProtKB-KW"/>
</dbReference>
<dbReference type="GO" id="GO:0006357">
    <property type="term" value="P:regulation of transcription by RNA polymerase II"/>
    <property type="evidence" value="ECO:0000318"/>
    <property type="project" value="GO_Central"/>
</dbReference>
<dbReference type="CDD" id="cd11606">
    <property type="entry name" value="COE_DBD"/>
    <property type="match status" value="1"/>
</dbReference>
<dbReference type="CDD" id="cd01175">
    <property type="entry name" value="IPT_COE"/>
    <property type="match status" value="1"/>
</dbReference>
<dbReference type="FunFam" id="1.10.287.4280:FF:000001">
    <property type="entry name" value="transcription factor COE1 isoform X2"/>
    <property type="match status" value="1"/>
</dbReference>
<dbReference type="FunFam" id="2.60.40.3180:FF:000002">
    <property type="entry name" value="transcription factor COE2 isoform X1"/>
    <property type="match status" value="1"/>
</dbReference>
<dbReference type="FunFam" id="2.60.40.10:FF:001696">
    <property type="entry name" value="Transcription factor COE3"/>
    <property type="match status" value="1"/>
</dbReference>
<dbReference type="Gene3D" id="1.10.287.4280">
    <property type="match status" value="1"/>
</dbReference>
<dbReference type="Gene3D" id="2.60.40.10">
    <property type="entry name" value="Immunoglobulins"/>
    <property type="match status" value="1"/>
</dbReference>
<dbReference type="Gene3D" id="2.60.40.3180">
    <property type="entry name" value="Transcription factor COE1, DNA-binding domain"/>
    <property type="match status" value="1"/>
</dbReference>
<dbReference type="InterPro" id="IPR032200">
    <property type="entry name" value="COE_DBD"/>
</dbReference>
<dbReference type="InterPro" id="IPR038173">
    <property type="entry name" value="COE_DBD_sf"/>
</dbReference>
<dbReference type="InterPro" id="IPR032201">
    <property type="entry name" value="COE_HLH"/>
</dbReference>
<dbReference type="InterPro" id="IPR038006">
    <property type="entry name" value="COE_IPT"/>
</dbReference>
<dbReference type="InterPro" id="IPR013783">
    <property type="entry name" value="Ig-like_fold"/>
</dbReference>
<dbReference type="InterPro" id="IPR014756">
    <property type="entry name" value="Ig_E-set"/>
</dbReference>
<dbReference type="InterPro" id="IPR002909">
    <property type="entry name" value="IPT_dom"/>
</dbReference>
<dbReference type="InterPro" id="IPR003523">
    <property type="entry name" value="Transcription_factor_COE"/>
</dbReference>
<dbReference type="InterPro" id="IPR018350">
    <property type="entry name" value="Transcription_factor_COE_CS"/>
</dbReference>
<dbReference type="PANTHER" id="PTHR10747">
    <property type="entry name" value="TRANSCRIPTION FACTOR COE FAMILY MEMBER"/>
    <property type="match status" value="1"/>
</dbReference>
<dbReference type="Pfam" id="PF16422">
    <property type="entry name" value="COE1_DBD"/>
    <property type="match status" value="1"/>
</dbReference>
<dbReference type="Pfam" id="PF16423">
    <property type="entry name" value="COE1_HLH"/>
    <property type="match status" value="1"/>
</dbReference>
<dbReference type="Pfam" id="PF01833">
    <property type="entry name" value="TIG"/>
    <property type="match status" value="1"/>
</dbReference>
<dbReference type="SMART" id="SM00429">
    <property type="entry name" value="IPT"/>
    <property type="match status" value="1"/>
</dbReference>
<dbReference type="SUPFAM" id="SSF81296">
    <property type="entry name" value="E set domains"/>
    <property type="match status" value="1"/>
</dbReference>
<dbReference type="PROSITE" id="PS01345">
    <property type="entry name" value="COE"/>
    <property type="match status" value="1"/>
</dbReference>
<organism>
    <name type="scientific">Xenopus laevis</name>
    <name type="common">African clawed frog</name>
    <dbReference type="NCBI Taxonomy" id="8355"/>
    <lineage>
        <taxon>Eukaryota</taxon>
        <taxon>Metazoa</taxon>
        <taxon>Chordata</taxon>
        <taxon>Craniata</taxon>
        <taxon>Vertebrata</taxon>
        <taxon>Euteleostomi</taxon>
        <taxon>Amphibia</taxon>
        <taxon>Batrachia</taxon>
        <taxon>Anura</taxon>
        <taxon>Pipoidea</taxon>
        <taxon>Pipidae</taxon>
        <taxon>Xenopodinae</taxon>
        <taxon>Xenopus</taxon>
        <taxon>Xenopus</taxon>
    </lineage>
</organism>
<keyword id="KW-0010">Activator</keyword>
<keyword id="KW-0025">Alternative splicing</keyword>
<keyword id="KW-0217">Developmental protein</keyword>
<keyword id="KW-0221">Differentiation</keyword>
<keyword id="KW-0238">DNA-binding</keyword>
<keyword id="KW-0479">Metal-binding</keyword>
<keyword id="KW-0524">Neurogenesis</keyword>
<keyword id="KW-0539">Nucleus</keyword>
<keyword id="KW-1185">Reference proteome</keyword>
<keyword id="KW-0804">Transcription</keyword>
<keyword id="KW-0805">Transcription regulation</keyword>
<keyword id="KW-0862">Zinc</keyword>
<keyword id="KW-0863">Zinc-finger</keyword>
<name>COE2B_XENLA</name>
<gene>
    <name evidence="9" type="primary">ebf2-b</name>
    <name evidence="6" type="synonym">coe2-b</name>
</gene>
<proteinExistence type="evidence at transcript level"/>
<evidence type="ECO:0000250" key="1"/>
<evidence type="ECO:0000250" key="2">
    <source>
        <dbReference type="UniProtKB" id="B7ZRJ4"/>
    </source>
</evidence>
<evidence type="ECO:0000255" key="3"/>
<evidence type="ECO:0000256" key="4">
    <source>
        <dbReference type="SAM" id="MobiDB-lite"/>
    </source>
</evidence>
<evidence type="ECO:0000269" key="5">
    <source>
    </source>
</evidence>
<evidence type="ECO:0000303" key="6">
    <source>
    </source>
</evidence>
<evidence type="ECO:0000305" key="7"/>
<evidence type="ECO:0000312" key="8">
    <source>
        <dbReference type="EMBL" id="AAB96782.1"/>
    </source>
</evidence>
<evidence type="ECO:0000312" key="9">
    <source>
        <dbReference type="EMBL" id="AAI70176.1"/>
    </source>
</evidence>
<reference evidence="7 8" key="1">
    <citation type="journal article" date="1998" name="Curr. Biol.">
        <title>XCoe2, a transcription factor of the Col/Olf-1/EBF family involved in the specification of primary neurons in Xenopus.</title>
        <authorList>
            <person name="Dubois L."/>
            <person name="Bally-Cuif L."/>
            <person name="Crozatier M."/>
            <person name="Moreau J."/>
            <person name="Paquereau L."/>
            <person name="Vincent A."/>
        </authorList>
    </citation>
    <scope>NUCLEOTIDE SEQUENCE [MRNA] (ISOFORM 2)</scope>
    <scope>FUNCTION</scope>
    <scope>TISSUE SPECIFICITY</scope>
    <scope>DEVELOPMENTAL STAGE</scope>
    <source>
        <tissue evidence="5">Tail bud</tissue>
    </source>
</reference>
<reference evidence="7 9" key="2">
    <citation type="submission" date="2008-11" db="EMBL/GenBank/DDBJ databases">
        <authorList>
            <consortium name="NIH - Xenopus Gene Collection (XGC) project"/>
        </authorList>
    </citation>
    <scope>NUCLEOTIDE SEQUENCE [LARGE SCALE MRNA] (ISOFORM 1)</scope>
</reference>